<comment type="function">
    <text evidence="2">Component of the ubiquinol-cytochrome c reductase complex (complex III or cytochrome b-c1 complex) that is part of the mitochondrial respiratory chain. The b-c1 complex mediates electron transfer from ubiquinol to cytochrome c. Contributes to the generation of a proton gradient across the mitochondrial membrane that is then used for ATP synthesis.</text>
</comment>
<comment type="cofactor">
    <cofactor evidence="2">
        <name>heme b</name>
        <dbReference type="ChEBI" id="CHEBI:60344"/>
    </cofactor>
    <text evidence="2">Binds 2 heme b groups non-covalently.</text>
</comment>
<comment type="subunit">
    <text evidence="2">The cytochrome bc1 complex contains 11 subunits: 3 respiratory subunits (MT-CYB, CYC1 and UQCRFS1), 2 core proteins (UQCRC1 and UQCRC2) and 6 low-molecular weight proteins (UQCRH/QCR6, UQCRB/QCR7, UQCRQ/QCR8, UQCR10/QCR9, UQCR11/QCR10 and a cleavage product of UQCRFS1). This cytochrome bc1 complex then forms a dimer.</text>
</comment>
<comment type="subcellular location">
    <subcellularLocation>
        <location evidence="2">Mitochondrion inner membrane</location>
        <topology evidence="2">Multi-pass membrane protein</topology>
    </subcellularLocation>
</comment>
<comment type="miscellaneous">
    <text evidence="1">Heme 1 (or BL or b562) is low-potential and absorbs at about 562 nm, and heme 2 (or BH or b566) is high-potential and absorbs at about 566 nm.</text>
</comment>
<comment type="similarity">
    <text evidence="3 4">Belongs to the cytochrome b family.</text>
</comment>
<comment type="caution">
    <text evidence="2">The full-length protein contains only eight transmembrane helices, not nine as predicted by bioinformatics tools.</text>
</comment>
<proteinExistence type="inferred from homology"/>
<sequence>MANMRKNHPLLKIINHSFIDLPAPSNISSWWNFGSLLGMCLVLQIATGLFLAMHYTADTTTAFSSVTHICRDVNYGWVIRYLHANGASMFFACLFLHVGRGLYYGSYMYLETWNIGVILLFTTMATAFMGYVLPWGQMSFWGATVITNLLSAIPYVGTDLVEWIWGGFSVDKATLTRFFAFHFILPFIITALVIVHLLFLHETGSSNPLGIDSDADKIPFHPYYTIKDILGVVVLLAVLSGLVLFSPDLLGDPDNYMPANPLNTPPHIKPEWYFLFAYAILRSIPNKLGGVVALAMSILILLFVPFLHTSKQRSMTFRPISQCLFWILVADLITLTWIGGQPVEHPFILIGQVASVLYFAIIIILMPLAGWLENYLMKW</sequence>
<keyword id="KW-0249">Electron transport</keyword>
<keyword id="KW-0349">Heme</keyword>
<keyword id="KW-0408">Iron</keyword>
<keyword id="KW-0472">Membrane</keyword>
<keyword id="KW-0479">Metal-binding</keyword>
<keyword id="KW-0496">Mitochondrion</keyword>
<keyword id="KW-0999">Mitochondrion inner membrane</keyword>
<keyword id="KW-0679">Respiratory chain</keyword>
<keyword id="KW-0812">Transmembrane</keyword>
<keyword id="KW-1133">Transmembrane helix</keyword>
<keyword id="KW-0813">Transport</keyword>
<keyword id="KW-0830">Ubiquinone</keyword>
<dbReference type="EMBL" id="AF217811">
    <property type="protein sequence ID" value="AAG09463.1"/>
    <property type="molecule type" value="Genomic_DNA"/>
</dbReference>
<dbReference type="EMBL" id="AJ421453">
    <property type="protein sequence ID" value="CAD13261.1"/>
    <property type="molecule type" value="Genomic_DNA"/>
</dbReference>
<dbReference type="RefSeq" id="NP_065227.1">
    <property type="nucleotide sequence ID" value="NC_002521.1"/>
</dbReference>
<dbReference type="SMR" id="Q9GA18"/>
<dbReference type="GeneID" id="809598"/>
<dbReference type="CTD" id="4519"/>
<dbReference type="HOGENOM" id="CLU_031114_3_0_1"/>
<dbReference type="GO" id="GO:0005743">
    <property type="term" value="C:mitochondrial inner membrane"/>
    <property type="evidence" value="ECO:0007669"/>
    <property type="project" value="UniProtKB-SubCell"/>
</dbReference>
<dbReference type="GO" id="GO:0045275">
    <property type="term" value="C:respiratory chain complex III"/>
    <property type="evidence" value="ECO:0007669"/>
    <property type="project" value="InterPro"/>
</dbReference>
<dbReference type="GO" id="GO:0046872">
    <property type="term" value="F:metal ion binding"/>
    <property type="evidence" value="ECO:0007669"/>
    <property type="project" value="UniProtKB-KW"/>
</dbReference>
<dbReference type="GO" id="GO:0008121">
    <property type="term" value="F:ubiquinol-cytochrome-c reductase activity"/>
    <property type="evidence" value="ECO:0007669"/>
    <property type="project" value="InterPro"/>
</dbReference>
<dbReference type="GO" id="GO:0006122">
    <property type="term" value="P:mitochondrial electron transport, ubiquinol to cytochrome c"/>
    <property type="evidence" value="ECO:0007669"/>
    <property type="project" value="TreeGrafter"/>
</dbReference>
<dbReference type="CDD" id="cd00290">
    <property type="entry name" value="cytochrome_b_C"/>
    <property type="match status" value="1"/>
</dbReference>
<dbReference type="CDD" id="cd00284">
    <property type="entry name" value="Cytochrome_b_N"/>
    <property type="match status" value="1"/>
</dbReference>
<dbReference type="FunFam" id="1.20.810.10:FF:000002">
    <property type="entry name" value="Cytochrome b"/>
    <property type="match status" value="1"/>
</dbReference>
<dbReference type="Gene3D" id="1.20.810.10">
    <property type="entry name" value="Cytochrome Bc1 Complex, Chain C"/>
    <property type="match status" value="1"/>
</dbReference>
<dbReference type="InterPro" id="IPR005798">
    <property type="entry name" value="Cyt_b/b6_C"/>
</dbReference>
<dbReference type="InterPro" id="IPR036150">
    <property type="entry name" value="Cyt_b/b6_C_sf"/>
</dbReference>
<dbReference type="InterPro" id="IPR005797">
    <property type="entry name" value="Cyt_b/b6_N"/>
</dbReference>
<dbReference type="InterPro" id="IPR027387">
    <property type="entry name" value="Cytb/b6-like_sf"/>
</dbReference>
<dbReference type="InterPro" id="IPR030689">
    <property type="entry name" value="Cytochrome_b"/>
</dbReference>
<dbReference type="InterPro" id="IPR048260">
    <property type="entry name" value="Cytochrome_b_C_euk/bac"/>
</dbReference>
<dbReference type="InterPro" id="IPR048259">
    <property type="entry name" value="Cytochrome_b_N_euk/bac"/>
</dbReference>
<dbReference type="InterPro" id="IPR016174">
    <property type="entry name" value="Di-haem_cyt_TM"/>
</dbReference>
<dbReference type="PANTHER" id="PTHR19271">
    <property type="entry name" value="CYTOCHROME B"/>
    <property type="match status" value="1"/>
</dbReference>
<dbReference type="PANTHER" id="PTHR19271:SF16">
    <property type="entry name" value="CYTOCHROME B"/>
    <property type="match status" value="1"/>
</dbReference>
<dbReference type="Pfam" id="PF00032">
    <property type="entry name" value="Cytochrom_B_C"/>
    <property type="match status" value="1"/>
</dbReference>
<dbReference type="Pfam" id="PF00033">
    <property type="entry name" value="Cytochrome_B"/>
    <property type="match status" value="1"/>
</dbReference>
<dbReference type="PIRSF" id="PIRSF038885">
    <property type="entry name" value="COB"/>
    <property type="match status" value="1"/>
</dbReference>
<dbReference type="SUPFAM" id="SSF81648">
    <property type="entry name" value="a domain/subunit of cytochrome bc1 complex (Ubiquinol-cytochrome c reductase)"/>
    <property type="match status" value="1"/>
</dbReference>
<dbReference type="SUPFAM" id="SSF81342">
    <property type="entry name" value="Transmembrane di-heme cytochromes"/>
    <property type="match status" value="1"/>
</dbReference>
<dbReference type="PROSITE" id="PS51003">
    <property type="entry name" value="CYTB_CTER"/>
    <property type="match status" value="1"/>
</dbReference>
<dbReference type="PROSITE" id="PS51002">
    <property type="entry name" value="CYTB_NTER"/>
    <property type="match status" value="1"/>
</dbReference>
<name>CYB_TUPBE</name>
<accession>Q9GA18</accession>
<geneLocation type="mitochondrion"/>
<gene>
    <name type="primary">MT-CYB</name>
    <name type="synonym">COB</name>
    <name type="synonym">CYTB</name>
    <name type="synonym">MTCYB</name>
</gene>
<protein>
    <recommendedName>
        <fullName>Cytochrome b</fullName>
    </recommendedName>
    <alternativeName>
        <fullName>Complex III subunit 3</fullName>
    </alternativeName>
    <alternativeName>
        <fullName>Complex III subunit III</fullName>
    </alternativeName>
    <alternativeName>
        <fullName>Cytochrome b-c1 complex subunit 3</fullName>
    </alternativeName>
    <alternativeName>
        <fullName>Ubiquinol-cytochrome-c reductase complex cytochrome b subunit</fullName>
    </alternativeName>
</protein>
<evidence type="ECO:0000250" key="1"/>
<evidence type="ECO:0000250" key="2">
    <source>
        <dbReference type="UniProtKB" id="P00157"/>
    </source>
</evidence>
<evidence type="ECO:0000255" key="3">
    <source>
        <dbReference type="PROSITE-ProRule" id="PRU00967"/>
    </source>
</evidence>
<evidence type="ECO:0000255" key="4">
    <source>
        <dbReference type="PROSITE-ProRule" id="PRU00968"/>
    </source>
</evidence>
<feature type="chain" id="PRO_0000254872" description="Cytochrome b">
    <location>
        <begin position="1"/>
        <end position="379"/>
    </location>
</feature>
<feature type="transmembrane region" description="Helical" evidence="2">
    <location>
        <begin position="33"/>
        <end position="53"/>
    </location>
</feature>
<feature type="transmembrane region" description="Helical" evidence="2">
    <location>
        <begin position="77"/>
        <end position="98"/>
    </location>
</feature>
<feature type="transmembrane region" description="Helical" evidence="2">
    <location>
        <begin position="113"/>
        <end position="133"/>
    </location>
</feature>
<feature type="transmembrane region" description="Helical" evidence="2">
    <location>
        <begin position="178"/>
        <end position="198"/>
    </location>
</feature>
<feature type="transmembrane region" description="Helical" evidence="2">
    <location>
        <begin position="226"/>
        <end position="246"/>
    </location>
</feature>
<feature type="transmembrane region" description="Helical" evidence="2">
    <location>
        <begin position="288"/>
        <end position="308"/>
    </location>
</feature>
<feature type="transmembrane region" description="Helical" evidence="2">
    <location>
        <begin position="320"/>
        <end position="340"/>
    </location>
</feature>
<feature type="transmembrane region" description="Helical" evidence="2">
    <location>
        <begin position="347"/>
        <end position="367"/>
    </location>
</feature>
<feature type="binding site" description="axial binding residue" evidence="2">
    <location>
        <position position="83"/>
    </location>
    <ligand>
        <name>heme b</name>
        <dbReference type="ChEBI" id="CHEBI:60344"/>
        <label>b562</label>
    </ligand>
    <ligandPart>
        <name>Fe</name>
        <dbReference type="ChEBI" id="CHEBI:18248"/>
    </ligandPart>
</feature>
<feature type="binding site" description="axial binding residue" evidence="2">
    <location>
        <position position="97"/>
    </location>
    <ligand>
        <name>heme b</name>
        <dbReference type="ChEBI" id="CHEBI:60344"/>
        <label>b566</label>
    </ligand>
    <ligandPart>
        <name>Fe</name>
        <dbReference type="ChEBI" id="CHEBI:18248"/>
    </ligandPart>
</feature>
<feature type="binding site" description="axial binding residue" evidence="2">
    <location>
        <position position="182"/>
    </location>
    <ligand>
        <name>heme b</name>
        <dbReference type="ChEBI" id="CHEBI:60344"/>
        <label>b562</label>
    </ligand>
    <ligandPart>
        <name>Fe</name>
        <dbReference type="ChEBI" id="CHEBI:18248"/>
    </ligandPart>
</feature>
<feature type="binding site" description="axial binding residue" evidence="2">
    <location>
        <position position="196"/>
    </location>
    <ligand>
        <name>heme b</name>
        <dbReference type="ChEBI" id="CHEBI:60344"/>
        <label>b566</label>
    </ligand>
    <ligandPart>
        <name>Fe</name>
        <dbReference type="ChEBI" id="CHEBI:18248"/>
    </ligandPart>
</feature>
<feature type="binding site" evidence="2">
    <location>
        <position position="201"/>
    </location>
    <ligand>
        <name>a ubiquinone</name>
        <dbReference type="ChEBI" id="CHEBI:16389"/>
    </ligand>
</feature>
<reference key="1">
    <citation type="journal article" date="2000" name="Mol. Biol. Evol.">
        <title>The complete mitochondrial genome of Tupaia belangeri and the phylogenetic affiliation of scandentia to other eutherian orders.</title>
        <authorList>
            <person name="Schmitz J."/>
            <person name="Ohme M."/>
            <person name="Zischler H."/>
        </authorList>
    </citation>
    <scope>NUCLEOTIDE SEQUENCE [GENOMIC DNA]</scope>
</reference>
<reference key="2">
    <citation type="journal article" date="2002" name="Proc. Natl. Acad. Sci. U.S.A.">
        <title>Mammalian mitogenomic relationships and the root of the eutherian tree.</title>
        <authorList>
            <person name="Arnason U."/>
            <person name="Adegoke J.A."/>
            <person name="Bodin K."/>
            <person name="Born E.W."/>
            <person name="Esa Y.B."/>
            <person name="Gullberg A."/>
            <person name="Nilsson M."/>
            <person name="Short R.V."/>
            <person name="Xu X."/>
            <person name="Janke A."/>
        </authorList>
    </citation>
    <scope>NUCLEOTIDE SEQUENCE [GENOMIC DNA]</scope>
</reference>
<organism>
    <name type="scientific">Tupaia belangeri</name>
    <name type="common">Common tree shrew</name>
    <name type="synonym">Tupaia glis belangeri</name>
    <dbReference type="NCBI Taxonomy" id="37347"/>
    <lineage>
        <taxon>Eukaryota</taxon>
        <taxon>Metazoa</taxon>
        <taxon>Chordata</taxon>
        <taxon>Craniata</taxon>
        <taxon>Vertebrata</taxon>
        <taxon>Euteleostomi</taxon>
        <taxon>Mammalia</taxon>
        <taxon>Eutheria</taxon>
        <taxon>Euarchontoglires</taxon>
        <taxon>Scandentia</taxon>
        <taxon>Tupaiidae</taxon>
        <taxon>Tupaia</taxon>
    </lineage>
</organism>